<evidence type="ECO:0000255" key="1">
    <source>
        <dbReference type="HAMAP-Rule" id="MF_00165"/>
    </source>
</evidence>
<organism>
    <name type="scientific">Chlorobium limicola (strain DSM 245 / NBRC 103803 / 6330)</name>
    <dbReference type="NCBI Taxonomy" id="290315"/>
    <lineage>
        <taxon>Bacteria</taxon>
        <taxon>Pseudomonadati</taxon>
        <taxon>Chlorobiota</taxon>
        <taxon>Chlorobiia</taxon>
        <taxon>Chlorobiales</taxon>
        <taxon>Chlorobiaceae</taxon>
        <taxon>Chlorobium/Pelodictyon group</taxon>
        <taxon>Chlorobium</taxon>
    </lineage>
</organism>
<feature type="chain" id="PRO_1000097384" description="Thymidylate kinase">
    <location>
        <begin position="1"/>
        <end position="219"/>
    </location>
</feature>
<feature type="binding site" evidence="1">
    <location>
        <begin position="7"/>
        <end position="14"/>
    </location>
    <ligand>
        <name>ATP</name>
        <dbReference type="ChEBI" id="CHEBI:30616"/>
    </ligand>
</feature>
<accession>B3EDD6</accession>
<sequence>MLITFEGIDGAGKSTQIRKLQKLLIGAHIDSITLREPGGTEVAEKIRQILLESRHEISPIGELLLFSASRAELVQQVILPAIDNGTTVILDRFFDSTIAYQGYGREIDQVMLQTIITLSTFSLQPDITFYLDISPENALMRKFSEKSLPIAFDESELDRMERSGLDFFRKVRQGYLDIIHKNERRFVLLDALDDPQMIHKRIIASLKERFPVFSGIKTR</sequence>
<dbReference type="EC" id="2.7.4.9" evidence="1"/>
<dbReference type="EMBL" id="CP001097">
    <property type="protein sequence ID" value="ACD90561.1"/>
    <property type="molecule type" value="Genomic_DNA"/>
</dbReference>
<dbReference type="RefSeq" id="WP_012466437.1">
    <property type="nucleotide sequence ID" value="NC_010803.1"/>
</dbReference>
<dbReference type="SMR" id="B3EDD6"/>
<dbReference type="STRING" id="290315.Clim_1510"/>
<dbReference type="KEGG" id="cli:Clim_1510"/>
<dbReference type="eggNOG" id="COG0125">
    <property type="taxonomic scope" value="Bacteria"/>
</dbReference>
<dbReference type="HOGENOM" id="CLU_049131_0_2_10"/>
<dbReference type="OrthoDB" id="9774907at2"/>
<dbReference type="Proteomes" id="UP000008841">
    <property type="component" value="Chromosome"/>
</dbReference>
<dbReference type="GO" id="GO:0005829">
    <property type="term" value="C:cytosol"/>
    <property type="evidence" value="ECO:0007669"/>
    <property type="project" value="TreeGrafter"/>
</dbReference>
<dbReference type="GO" id="GO:0005524">
    <property type="term" value="F:ATP binding"/>
    <property type="evidence" value="ECO:0007669"/>
    <property type="project" value="UniProtKB-UniRule"/>
</dbReference>
<dbReference type="GO" id="GO:0004798">
    <property type="term" value="F:dTMP kinase activity"/>
    <property type="evidence" value="ECO:0007669"/>
    <property type="project" value="UniProtKB-UniRule"/>
</dbReference>
<dbReference type="GO" id="GO:0006233">
    <property type="term" value="P:dTDP biosynthetic process"/>
    <property type="evidence" value="ECO:0007669"/>
    <property type="project" value="InterPro"/>
</dbReference>
<dbReference type="GO" id="GO:0006235">
    <property type="term" value="P:dTTP biosynthetic process"/>
    <property type="evidence" value="ECO:0007669"/>
    <property type="project" value="UniProtKB-UniRule"/>
</dbReference>
<dbReference type="GO" id="GO:0006227">
    <property type="term" value="P:dUDP biosynthetic process"/>
    <property type="evidence" value="ECO:0007669"/>
    <property type="project" value="TreeGrafter"/>
</dbReference>
<dbReference type="CDD" id="cd01672">
    <property type="entry name" value="TMPK"/>
    <property type="match status" value="1"/>
</dbReference>
<dbReference type="FunFam" id="3.40.50.300:FF:000225">
    <property type="entry name" value="Thymidylate kinase"/>
    <property type="match status" value="1"/>
</dbReference>
<dbReference type="Gene3D" id="3.40.50.300">
    <property type="entry name" value="P-loop containing nucleotide triphosphate hydrolases"/>
    <property type="match status" value="1"/>
</dbReference>
<dbReference type="HAMAP" id="MF_00165">
    <property type="entry name" value="Thymidylate_kinase"/>
    <property type="match status" value="1"/>
</dbReference>
<dbReference type="InterPro" id="IPR027417">
    <property type="entry name" value="P-loop_NTPase"/>
</dbReference>
<dbReference type="InterPro" id="IPR039430">
    <property type="entry name" value="Thymidylate_kin-like_dom"/>
</dbReference>
<dbReference type="InterPro" id="IPR018095">
    <property type="entry name" value="Thymidylate_kin_CS"/>
</dbReference>
<dbReference type="InterPro" id="IPR018094">
    <property type="entry name" value="Thymidylate_kinase"/>
</dbReference>
<dbReference type="NCBIfam" id="TIGR00041">
    <property type="entry name" value="DTMP_kinase"/>
    <property type="match status" value="1"/>
</dbReference>
<dbReference type="PANTHER" id="PTHR10344">
    <property type="entry name" value="THYMIDYLATE KINASE"/>
    <property type="match status" value="1"/>
</dbReference>
<dbReference type="PANTHER" id="PTHR10344:SF4">
    <property type="entry name" value="UMP-CMP KINASE 2, MITOCHONDRIAL"/>
    <property type="match status" value="1"/>
</dbReference>
<dbReference type="Pfam" id="PF02223">
    <property type="entry name" value="Thymidylate_kin"/>
    <property type="match status" value="1"/>
</dbReference>
<dbReference type="SUPFAM" id="SSF52540">
    <property type="entry name" value="P-loop containing nucleoside triphosphate hydrolases"/>
    <property type="match status" value="1"/>
</dbReference>
<dbReference type="PROSITE" id="PS01331">
    <property type="entry name" value="THYMIDYLATE_KINASE"/>
    <property type="match status" value="1"/>
</dbReference>
<proteinExistence type="inferred from homology"/>
<gene>
    <name evidence="1" type="primary">tmk</name>
    <name type="ordered locus">Clim_1510</name>
</gene>
<name>KTHY_CHLL2</name>
<protein>
    <recommendedName>
        <fullName evidence="1">Thymidylate kinase</fullName>
        <ecNumber evidence="1">2.7.4.9</ecNumber>
    </recommendedName>
    <alternativeName>
        <fullName evidence="1">dTMP kinase</fullName>
    </alternativeName>
</protein>
<comment type="function">
    <text evidence="1">Phosphorylation of dTMP to form dTDP in both de novo and salvage pathways of dTTP synthesis.</text>
</comment>
<comment type="catalytic activity">
    <reaction evidence="1">
        <text>dTMP + ATP = dTDP + ADP</text>
        <dbReference type="Rhea" id="RHEA:13517"/>
        <dbReference type="ChEBI" id="CHEBI:30616"/>
        <dbReference type="ChEBI" id="CHEBI:58369"/>
        <dbReference type="ChEBI" id="CHEBI:63528"/>
        <dbReference type="ChEBI" id="CHEBI:456216"/>
        <dbReference type="EC" id="2.7.4.9"/>
    </reaction>
</comment>
<comment type="similarity">
    <text evidence="1">Belongs to the thymidylate kinase family.</text>
</comment>
<reference key="1">
    <citation type="submission" date="2008-05" db="EMBL/GenBank/DDBJ databases">
        <title>Complete sequence of Chlorobium limicola DSM 245.</title>
        <authorList>
            <consortium name="US DOE Joint Genome Institute"/>
            <person name="Lucas S."/>
            <person name="Copeland A."/>
            <person name="Lapidus A."/>
            <person name="Glavina del Rio T."/>
            <person name="Dalin E."/>
            <person name="Tice H."/>
            <person name="Bruce D."/>
            <person name="Goodwin L."/>
            <person name="Pitluck S."/>
            <person name="Schmutz J."/>
            <person name="Larimer F."/>
            <person name="Land M."/>
            <person name="Hauser L."/>
            <person name="Kyrpides N."/>
            <person name="Ovchinnikova G."/>
            <person name="Zhao F."/>
            <person name="Li T."/>
            <person name="Liu Z."/>
            <person name="Overmann J."/>
            <person name="Bryant D.A."/>
            <person name="Richardson P."/>
        </authorList>
    </citation>
    <scope>NUCLEOTIDE SEQUENCE [LARGE SCALE GENOMIC DNA]</scope>
    <source>
        <strain>DSM 245 / NBRC 103803 / 6330</strain>
    </source>
</reference>
<keyword id="KW-0067">ATP-binding</keyword>
<keyword id="KW-0418">Kinase</keyword>
<keyword id="KW-0545">Nucleotide biosynthesis</keyword>
<keyword id="KW-0547">Nucleotide-binding</keyword>
<keyword id="KW-0808">Transferase</keyword>